<dbReference type="EC" id="1.3.99.33" evidence="4 7"/>
<dbReference type="EMBL" id="AP008937">
    <property type="protein sequence ID" value="BAG27322.1"/>
    <property type="molecule type" value="Genomic_DNA"/>
</dbReference>
<dbReference type="RefSeq" id="WP_012391268.1">
    <property type="nucleotide sequence ID" value="NC_010610.1"/>
</dbReference>
<dbReference type="SMR" id="B2GCE0"/>
<dbReference type="KEGG" id="lfe:LAF_0986"/>
<dbReference type="PATRIC" id="fig|334390.5.peg.1091"/>
<dbReference type="eggNOG" id="COG1053">
    <property type="taxonomic scope" value="Bacteria"/>
</dbReference>
<dbReference type="eggNOG" id="COG3976">
    <property type="taxonomic scope" value="Bacteria"/>
</dbReference>
<dbReference type="HOGENOM" id="CLU_011398_4_0_9"/>
<dbReference type="Proteomes" id="UP000001697">
    <property type="component" value="Chromosome"/>
</dbReference>
<dbReference type="GO" id="GO:0016020">
    <property type="term" value="C:membrane"/>
    <property type="evidence" value="ECO:0007669"/>
    <property type="project" value="InterPro"/>
</dbReference>
<dbReference type="GO" id="GO:0010181">
    <property type="term" value="F:FMN binding"/>
    <property type="evidence" value="ECO:0007669"/>
    <property type="project" value="InterPro"/>
</dbReference>
<dbReference type="GO" id="GO:0033765">
    <property type="term" value="F:steroid dehydrogenase activity, acting on the CH-CH group of donors"/>
    <property type="evidence" value="ECO:0007669"/>
    <property type="project" value="UniProtKB-ARBA"/>
</dbReference>
<dbReference type="Gene3D" id="3.90.1010.20">
    <property type="match status" value="1"/>
</dbReference>
<dbReference type="Gene3D" id="3.50.50.60">
    <property type="entry name" value="FAD/NAD(P)-binding domain"/>
    <property type="match status" value="2"/>
</dbReference>
<dbReference type="Gene3D" id="3.90.700.10">
    <property type="entry name" value="Succinate dehydrogenase/fumarate reductase flavoprotein, catalytic domain"/>
    <property type="match status" value="1"/>
</dbReference>
<dbReference type="InterPro" id="IPR003953">
    <property type="entry name" value="FAD-dep_OxRdtase_2_FAD-bd"/>
</dbReference>
<dbReference type="InterPro" id="IPR050315">
    <property type="entry name" value="FAD-oxidoreductase_2"/>
</dbReference>
<dbReference type="InterPro" id="IPR036188">
    <property type="entry name" value="FAD/NAD-bd_sf"/>
</dbReference>
<dbReference type="InterPro" id="IPR007329">
    <property type="entry name" value="FMN-bd"/>
</dbReference>
<dbReference type="InterPro" id="IPR027477">
    <property type="entry name" value="Succ_DH/fumarate_Rdtase_cat_sf"/>
</dbReference>
<dbReference type="PANTHER" id="PTHR43400:SF7">
    <property type="entry name" value="FAD-DEPENDENT OXIDOREDUCTASE 2 FAD BINDING DOMAIN-CONTAINING PROTEIN"/>
    <property type="match status" value="1"/>
</dbReference>
<dbReference type="PANTHER" id="PTHR43400">
    <property type="entry name" value="FUMARATE REDUCTASE"/>
    <property type="match status" value="1"/>
</dbReference>
<dbReference type="Pfam" id="PF00890">
    <property type="entry name" value="FAD_binding_2"/>
    <property type="match status" value="2"/>
</dbReference>
<dbReference type="Pfam" id="PF04205">
    <property type="entry name" value="FMN_bind"/>
    <property type="match status" value="1"/>
</dbReference>
<dbReference type="PRINTS" id="PR00411">
    <property type="entry name" value="PNDRDTASEI"/>
</dbReference>
<dbReference type="SMART" id="SM00900">
    <property type="entry name" value="FMN_bind"/>
    <property type="match status" value="1"/>
</dbReference>
<dbReference type="SUPFAM" id="SSF51905">
    <property type="entry name" value="FAD/NAD(P)-binding domain"/>
    <property type="match status" value="1"/>
</dbReference>
<dbReference type="SUPFAM" id="SSF56425">
    <property type="entry name" value="Succinate dehydrogenase/fumarate reductase flavoprotein, catalytic domain"/>
    <property type="match status" value="1"/>
</dbReference>
<sequence length="617" mass="66121">MKAGTYKVKAKGHGSSFMPMEVTLSDDAIQRIQVDASGETSGIADEVFKRLPAKIVKGQTLNVDTVAGATISSRGVVGGVAEAITLAGGDADEWKQRAKPEIATQAAQVEEYQTDVVVVGAGGAGLAAATRSLQHDKQVVILEKFPQLGGNTTRAGGPMNAADPDWQRDFAALTGEKETLKRLANTPLEQIDPEYRADFERLREQIKEYIASGAQYLFDSNLLHEIQTYLGGKREDLAGHEIHGRYQLVKTLVDNALDSVKWLADLGVKFDQTDVTMPVGALWRRGHKPVEPMGYAFIHVLGDWVTEHGATILTETRAEHLLMENGRVVGVVAHKTDGTKVTVRAKSTFLTAGGFGANTPMVQKYNTYWEHIDDDIATTNSPAITGDGISLGQEAGAELTGMGFIQLMPVSDPVTGELFTGLQTPPGNFIMVNQEGKRFVNEFAERDTLAAAAIAQGGLFYLIADDKIKETAYNTTQESIDAQVEAGTLFKADTLAELAGKVGMDPATLEDTINKYNSYVDAGHDPEFGKSASHLKCEVAPFYATPRKPAIHHTMGGLAIDKHGHVLDKAERVIAGLYSAGENAGGLHAGNRLGGNSLADIFTFGRLAADTAAQENG</sequence>
<evidence type="ECO:0000250" key="1">
    <source>
        <dbReference type="UniProtKB" id="A0A1R4LHH9"/>
    </source>
</evidence>
<evidence type="ECO:0000250" key="2">
    <source>
        <dbReference type="UniProtKB" id="P0C278"/>
    </source>
</evidence>
<evidence type="ECO:0000250" key="3">
    <source>
        <dbReference type="UniProtKB" id="P83223"/>
    </source>
</evidence>
<evidence type="ECO:0000250" key="4">
    <source>
        <dbReference type="UniProtKB" id="Q8CVD0"/>
    </source>
</evidence>
<evidence type="ECO:0000303" key="5">
    <source>
    </source>
</evidence>
<evidence type="ECO:0000305" key="6"/>
<evidence type="ECO:0000305" key="7">
    <source>
    </source>
</evidence>
<evidence type="ECO:0000312" key="8">
    <source>
        <dbReference type="EMBL" id="BAG27322.1"/>
    </source>
</evidence>
<name>URDA_LIMF3</name>
<gene>
    <name evidence="5" type="primary">urdA</name>
    <name evidence="8" type="ordered locus">LAF_0986</name>
</gene>
<accession>B2GCE0</accession>
<feature type="chain" id="PRO_0000446102" description="Urocanate reductase">
    <location>
        <begin position="1"/>
        <end position="617"/>
    </location>
</feature>
<feature type="active site" description="Proton donor" evidence="2">
    <location>
        <position position="446"/>
    </location>
</feature>
<feature type="binding site" evidence="3">
    <location>
        <position position="124"/>
    </location>
    <ligand>
        <name>FAD</name>
        <dbReference type="ChEBI" id="CHEBI:57692"/>
    </ligand>
</feature>
<feature type="binding site" evidence="3">
    <location>
        <position position="143"/>
    </location>
    <ligand>
        <name>FAD</name>
        <dbReference type="ChEBI" id="CHEBI:57692"/>
    </ligand>
</feature>
<feature type="binding site" evidence="3">
    <location>
        <position position="151"/>
    </location>
    <ligand>
        <name>FAD</name>
        <dbReference type="ChEBI" id="CHEBI:57692"/>
    </ligand>
</feature>
<feature type="binding site" evidence="3">
    <location>
        <position position="152"/>
    </location>
    <ligand>
        <name>FAD</name>
        <dbReference type="ChEBI" id="CHEBI:57692"/>
    </ligand>
</feature>
<feature type="binding site" evidence="3">
    <location>
        <position position="156"/>
    </location>
    <ligand>
        <name>FAD</name>
        <dbReference type="ChEBI" id="CHEBI:57692"/>
    </ligand>
</feature>
<feature type="binding site" evidence="3">
    <location>
        <position position="157"/>
    </location>
    <ligand>
        <name>FAD</name>
        <dbReference type="ChEBI" id="CHEBI:57692"/>
    </ligand>
</feature>
<feature type="binding site" evidence="3">
    <location>
        <position position="387"/>
    </location>
    <ligand>
        <name>FAD</name>
        <dbReference type="ChEBI" id="CHEBI:57692"/>
    </ligand>
</feature>
<feature type="binding site" evidence="3">
    <location>
        <position position="553"/>
    </location>
    <ligand>
        <name>FAD</name>
        <dbReference type="ChEBI" id="CHEBI:57692"/>
    </ligand>
</feature>
<feature type="binding site" evidence="3">
    <location>
        <position position="582"/>
    </location>
    <ligand>
        <name>FAD</name>
        <dbReference type="ChEBI" id="CHEBI:57692"/>
    </ligand>
</feature>
<feature type="binding site" evidence="3">
    <location>
        <position position="598"/>
    </location>
    <ligand>
        <name>FAD</name>
        <dbReference type="ChEBI" id="CHEBI:57692"/>
    </ligand>
</feature>
<feature type="modified residue" description="FMN phosphoryl threonine" evidence="1">
    <location>
        <position position="70"/>
    </location>
</feature>
<organism>
    <name type="scientific">Limosilactobacillus fermentum (strain NBRC 3956 / LMG 18251)</name>
    <name type="common">Lactobacillus fermentum</name>
    <dbReference type="NCBI Taxonomy" id="334390"/>
    <lineage>
        <taxon>Bacteria</taxon>
        <taxon>Bacillati</taxon>
        <taxon>Bacillota</taxon>
        <taxon>Bacilli</taxon>
        <taxon>Lactobacillales</taxon>
        <taxon>Lactobacillaceae</taxon>
        <taxon>Limosilactobacillus</taxon>
    </lineage>
</organism>
<reference key="1">
    <citation type="journal article" date="2008" name="DNA Res.">
        <title>Comparative genome analysis of Lactobacillus reuteri and Lactobacillus fermentum reveal a genomic island for reuterin and cobalamin production.</title>
        <authorList>
            <person name="Morita H."/>
            <person name="Toh H."/>
            <person name="Fukuda S."/>
            <person name="Horikawa H."/>
            <person name="Oshima K."/>
            <person name="Suzuki T."/>
            <person name="Murakami M."/>
            <person name="Hisamatsu S."/>
            <person name="Kato Y."/>
            <person name="Takizawa T."/>
            <person name="Fukuoka H."/>
            <person name="Yoshimura T."/>
            <person name="Itoh K."/>
            <person name="O'Sullivan D.J."/>
            <person name="McKay L.L."/>
            <person name="Ohno H."/>
            <person name="Kikuchi J."/>
            <person name="Masaoka T."/>
            <person name="Hattori M."/>
        </authorList>
    </citation>
    <scope>NUCLEOTIDE SEQUENCE [LARGE SCALE GENOMIC DNA]</scope>
    <source>
        <strain>NBRC 3956 / LMG 18251</strain>
    </source>
</reference>
<reference key="2">
    <citation type="journal article" date="2018" name="Cell">
        <title>Microbially produced imidazole propionate impairs insulin signaling through mTORC1.</title>
        <authorList>
            <person name="Koh A."/>
            <person name="Molinaro A."/>
            <person name="Staahlman M."/>
            <person name="Khan M.T."/>
            <person name="Schmidt C."/>
            <person name="Manneraas-Holm L."/>
            <person name="Wu H."/>
            <person name="Carreras A."/>
            <person name="Jeong H."/>
            <person name="Olofsson L.E."/>
            <person name="Bergh P.O."/>
            <person name="Gerdes V."/>
            <person name="Hartstra A."/>
            <person name="de Brauw M."/>
            <person name="Perkins R."/>
            <person name="Nieuwdorp M."/>
            <person name="Bergstroem G."/>
            <person name="Baeckhed F."/>
        </authorList>
    </citation>
    <scope>PREDICTED FUNCTION</scope>
    <scope>CATALYTIC ACTIVITY</scope>
    <source>
        <strain>NBRC 3956 / LMG 18251</strain>
    </source>
</reference>
<comment type="function">
    <text evidence="7">Catalyzes the two-electron reduction of urocanate to dihydrourocanate (also named imidazole propionate or deamino-histidine). Dihydrourocanate is present at higher concentrations in subjects with type 2 diabetes, and directly impairs glucose tolerance and insulin signaling at the level of insulin receptor substrate (IRS) through activation of p38 gamma (MAPK12)-p62-mTORC1. Therefore, the UrdA enzyme from the gut bacteria L.fermentum strain NBRC 3956 may contribute to the pathogenesis of type 2 diabetes by producing the microbial metabolite dihydrourocanate.</text>
</comment>
<comment type="catalytic activity">
    <reaction evidence="4 7">
        <text>dihydrourocanate + A = urocanate + AH2</text>
        <dbReference type="Rhea" id="RHEA:36059"/>
        <dbReference type="ChEBI" id="CHEBI:13193"/>
        <dbReference type="ChEBI" id="CHEBI:17499"/>
        <dbReference type="ChEBI" id="CHEBI:27247"/>
        <dbReference type="ChEBI" id="CHEBI:72991"/>
        <dbReference type="EC" id="1.3.99.33"/>
    </reaction>
</comment>
<comment type="cofactor">
    <cofactor evidence="4">
        <name>FAD</name>
        <dbReference type="ChEBI" id="CHEBI:57692"/>
    </cofactor>
    <text evidence="4">Binds 1 FAD per subunit.</text>
</comment>
<comment type="cofactor">
    <cofactor evidence="4">
        <name>FMN</name>
        <dbReference type="ChEBI" id="CHEBI:58210"/>
    </cofactor>
    <text evidence="4">Binds 1 FMN covalently per subunit.</text>
</comment>
<comment type="miscellaneous">
    <text evidence="7">L.fermentum strain NBRC 3956 is significantly more abundant in subjects with type 2 diabetes (T2D) compared with subjects with normal glucose tolerance (NGT).</text>
</comment>
<comment type="similarity">
    <text evidence="6">Belongs to the FAD-dependent oxidoreductase 2 family. FRD/SDH subfamily.</text>
</comment>
<proteinExistence type="evidence at protein level"/>
<keyword id="KW-0274">FAD</keyword>
<keyword id="KW-0285">Flavoprotein</keyword>
<keyword id="KW-0288">FMN</keyword>
<keyword id="KW-0560">Oxidoreductase</keyword>
<keyword id="KW-0597">Phosphoprotein</keyword>
<keyword id="KW-1185">Reference proteome</keyword>
<protein>
    <recommendedName>
        <fullName evidence="5">Urocanate reductase</fullName>
        <ecNumber evidence="4 7">1.3.99.33</ecNumber>
    </recommendedName>
</protein>